<accession>Q92J66</accession>
<sequence>MLSIIGFIITISILVFIHEFGHYCIARYFNVKVEEFSIGFGKALIGITDKKGVRWKICLIPLGGYVKIYGYDRSLMDKTKEVNEKVAFDAKSCLERFLIVAAGPLINYLLAIIIFAGFYCYFGKTEIPPIIGNVVASSPAERADLRAGDKIVKVNDKSVKDFGDVQREILINGFSSSTLTIERKSEEFIVNIMPQEIIISPPEEKQVNKKTLRIGIIAKNESIHTKIGILGGLWEAINTTIDMSALTLNAISQMIVGKRSFDEIGGPIAIAKESGKSIAGGTQMYLLFIAMLSVNLGLLNLLPIPVLDGGHLVFILYEAITGKLPHPKTKNILLQLGAIIIIFLIIIAVSNDIQNLFS</sequence>
<reference key="1">
    <citation type="journal article" date="2001" name="Science">
        <title>Mechanisms of evolution in Rickettsia conorii and R. prowazekii.</title>
        <authorList>
            <person name="Ogata H."/>
            <person name="Audic S."/>
            <person name="Renesto-Audiffren P."/>
            <person name="Fournier P.-E."/>
            <person name="Barbe V."/>
            <person name="Samson D."/>
            <person name="Roux V."/>
            <person name="Cossart P."/>
            <person name="Weissenbach J."/>
            <person name="Claverie J.-M."/>
            <person name="Raoult D."/>
        </authorList>
    </citation>
    <scope>NUCLEOTIDE SEQUENCE [LARGE SCALE GENOMIC DNA]</scope>
    <source>
        <strain>ATCC VR-613 / Malish 7</strain>
    </source>
</reference>
<evidence type="ECO:0000250" key="1"/>
<evidence type="ECO:0000255" key="2"/>
<evidence type="ECO:0000255" key="3">
    <source>
        <dbReference type="PROSITE-ProRule" id="PRU00143"/>
    </source>
</evidence>
<evidence type="ECO:0000305" key="4"/>
<feature type="chain" id="PRO_0000088457" description="Putative zinc metalloprotease RC0203">
    <location>
        <begin position="1"/>
        <end position="358"/>
    </location>
</feature>
<feature type="transmembrane region" description="Helical" evidence="2">
    <location>
        <begin position="52"/>
        <end position="71"/>
    </location>
</feature>
<feature type="transmembrane region" description="Helical" evidence="2">
    <location>
        <begin position="97"/>
        <end position="119"/>
    </location>
</feature>
<feature type="transmembrane region" description="Helical" evidence="2">
    <location>
        <begin position="285"/>
        <end position="307"/>
    </location>
</feature>
<feature type="transmembrane region" description="Helical" evidence="2">
    <location>
        <begin position="332"/>
        <end position="351"/>
    </location>
</feature>
<feature type="domain" description="PDZ" evidence="3">
    <location>
        <begin position="102"/>
        <end position="186"/>
    </location>
</feature>
<feature type="active site" evidence="2">
    <location>
        <position position="19"/>
    </location>
</feature>
<feature type="binding site" evidence="2">
    <location>
        <position position="18"/>
    </location>
    <ligand>
        <name>Zn(2+)</name>
        <dbReference type="ChEBI" id="CHEBI:29105"/>
        <note>catalytic</note>
    </ligand>
</feature>
<feature type="binding site" evidence="2">
    <location>
        <position position="22"/>
    </location>
    <ligand>
        <name>Zn(2+)</name>
        <dbReference type="ChEBI" id="CHEBI:29105"/>
        <note>catalytic</note>
    </ligand>
</feature>
<comment type="cofactor">
    <cofactor evidence="4">
        <name>Zn(2+)</name>
        <dbReference type="ChEBI" id="CHEBI:29105"/>
    </cofactor>
</comment>
<comment type="subcellular location">
    <subcellularLocation>
        <location evidence="1">Cell inner membrane</location>
        <topology evidence="1">Multi-pass membrane protein</topology>
    </subcellularLocation>
</comment>
<comment type="similarity">
    <text evidence="4">Belongs to the peptidase M50B family.</text>
</comment>
<gene>
    <name type="ordered locus">RC0203</name>
</gene>
<protein>
    <recommendedName>
        <fullName>Putative zinc metalloprotease RC0203</fullName>
        <ecNumber>3.4.24.-</ecNumber>
    </recommendedName>
</protein>
<proteinExistence type="inferred from homology"/>
<name>Y203_RICCN</name>
<dbReference type="EC" id="3.4.24.-"/>
<dbReference type="EMBL" id="AE006914">
    <property type="protein sequence ID" value="AAL02741.1"/>
    <property type="molecule type" value="Genomic_DNA"/>
</dbReference>
<dbReference type="PIR" id="C97725">
    <property type="entry name" value="C97725"/>
</dbReference>
<dbReference type="RefSeq" id="WP_010976870.1">
    <property type="nucleotide sequence ID" value="NC_003103.1"/>
</dbReference>
<dbReference type="SMR" id="Q92J66"/>
<dbReference type="GeneID" id="927984"/>
<dbReference type="KEGG" id="rco:RC0203"/>
<dbReference type="PATRIC" id="fig|272944.4.peg.233"/>
<dbReference type="HOGENOM" id="CLU_025778_1_0_5"/>
<dbReference type="Proteomes" id="UP000000816">
    <property type="component" value="Chromosome"/>
</dbReference>
<dbReference type="GO" id="GO:0005886">
    <property type="term" value="C:plasma membrane"/>
    <property type="evidence" value="ECO:0007669"/>
    <property type="project" value="UniProtKB-SubCell"/>
</dbReference>
<dbReference type="GO" id="GO:0046872">
    <property type="term" value="F:metal ion binding"/>
    <property type="evidence" value="ECO:0007669"/>
    <property type="project" value="UniProtKB-KW"/>
</dbReference>
<dbReference type="GO" id="GO:0004222">
    <property type="term" value="F:metalloendopeptidase activity"/>
    <property type="evidence" value="ECO:0007669"/>
    <property type="project" value="InterPro"/>
</dbReference>
<dbReference type="GO" id="GO:0006508">
    <property type="term" value="P:proteolysis"/>
    <property type="evidence" value="ECO:0007669"/>
    <property type="project" value="UniProtKB-KW"/>
</dbReference>
<dbReference type="CDD" id="cd23081">
    <property type="entry name" value="cpPDZ_EcRseP-like"/>
    <property type="match status" value="1"/>
</dbReference>
<dbReference type="CDD" id="cd06163">
    <property type="entry name" value="S2P-M50_PDZ_RseP-like"/>
    <property type="match status" value="1"/>
</dbReference>
<dbReference type="Gene3D" id="2.30.42.10">
    <property type="match status" value="1"/>
</dbReference>
<dbReference type="InterPro" id="IPR001478">
    <property type="entry name" value="PDZ"/>
</dbReference>
<dbReference type="InterPro" id="IPR041489">
    <property type="entry name" value="PDZ_6"/>
</dbReference>
<dbReference type="InterPro" id="IPR036034">
    <property type="entry name" value="PDZ_sf"/>
</dbReference>
<dbReference type="InterPro" id="IPR004387">
    <property type="entry name" value="Pept_M50_Zn"/>
</dbReference>
<dbReference type="InterPro" id="IPR008915">
    <property type="entry name" value="Peptidase_M50"/>
</dbReference>
<dbReference type="NCBIfam" id="TIGR00054">
    <property type="entry name" value="RIP metalloprotease RseP"/>
    <property type="match status" value="1"/>
</dbReference>
<dbReference type="PANTHER" id="PTHR42837:SF2">
    <property type="entry name" value="MEMBRANE METALLOPROTEASE ARASP2, CHLOROPLASTIC-RELATED"/>
    <property type="match status" value="1"/>
</dbReference>
<dbReference type="PANTHER" id="PTHR42837">
    <property type="entry name" value="REGULATOR OF SIGMA-E PROTEASE RSEP"/>
    <property type="match status" value="1"/>
</dbReference>
<dbReference type="Pfam" id="PF17820">
    <property type="entry name" value="PDZ_6"/>
    <property type="match status" value="1"/>
</dbReference>
<dbReference type="Pfam" id="PF02163">
    <property type="entry name" value="Peptidase_M50"/>
    <property type="match status" value="1"/>
</dbReference>
<dbReference type="SMART" id="SM00228">
    <property type="entry name" value="PDZ"/>
    <property type="match status" value="1"/>
</dbReference>
<dbReference type="SUPFAM" id="SSF50156">
    <property type="entry name" value="PDZ domain-like"/>
    <property type="match status" value="1"/>
</dbReference>
<dbReference type="PROSITE" id="PS50106">
    <property type="entry name" value="PDZ"/>
    <property type="match status" value="1"/>
</dbReference>
<organism>
    <name type="scientific">Rickettsia conorii (strain ATCC VR-613 / Malish 7)</name>
    <dbReference type="NCBI Taxonomy" id="272944"/>
    <lineage>
        <taxon>Bacteria</taxon>
        <taxon>Pseudomonadati</taxon>
        <taxon>Pseudomonadota</taxon>
        <taxon>Alphaproteobacteria</taxon>
        <taxon>Rickettsiales</taxon>
        <taxon>Rickettsiaceae</taxon>
        <taxon>Rickettsieae</taxon>
        <taxon>Rickettsia</taxon>
        <taxon>spotted fever group</taxon>
    </lineage>
</organism>
<keyword id="KW-0997">Cell inner membrane</keyword>
<keyword id="KW-1003">Cell membrane</keyword>
<keyword id="KW-0378">Hydrolase</keyword>
<keyword id="KW-0472">Membrane</keyword>
<keyword id="KW-0479">Metal-binding</keyword>
<keyword id="KW-0482">Metalloprotease</keyword>
<keyword id="KW-0645">Protease</keyword>
<keyword id="KW-0812">Transmembrane</keyword>
<keyword id="KW-1133">Transmembrane helix</keyword>
<keyword id="KW-0862">Zinc</keyword>